<organism>
    <name type="scientific">Rhizobium leguminosarum bv. viciae</name>
    <dbReference type="NCBI Taxonomy" id="387"/>
    <lineage>
        <taxon>Bacteria</taxon>
        <taxon>Pseudomonadati</taxon>
        <taxon>Pseudomonadota</taxon>
        <taxon>Alphaproteobacteria</taxon>
        <taxon>Hyphomicrobiales</taxon>
        <taxon>Rhizobiaceae</taxon>
        <taxon>Rhizobium/Agrobacterium group</taxon>
        <taxon>Rhizobium</taxon>
    </lineage>
</organism>
<protein>
    <recommendedName>
        <fullName>Nitrogen fixation protein FixI</fullName>
    </recommendedName>
    <alternativeName>
        <fullName>E1-E2 type cation ATPase FixI</fullName>
        <ecNumber>7.2.2.-</ecNumber>
    </alternativeName>
</protein>
<sequence length="761" mass="80617">MSCCTMDAESVLALSTTSFSAEEVRLASQPLGEGLRQLDLSVSDVHCGGCISTIERALLTLPFVKTARVNLTARRVTCVYQEEIEARATDPSKILGEINSAGYRAHLFTPSAPESDKTRNQLLLAIGVSGFAAPNIMLLSVSVWSGADAATRDMFHWISAMIAAPALVYAGRFFFKSAWNALRHGRTNMDVPISVTVSLSYAVSLWETVHHGEHAWFDASVSLLFFLLIGRTLDHIMREKARAAINGLARLAPRGALLINPDGSRRYIAVEEIAAGDEISIAAGERVPVDGIVVSGESDLDLSIVTGESSPVTVASDSEVSSGAMNLTGSLVLRATRIAKNSLLSEIIGLMEAAEGGRARYRRIADRAATLYSPVVHLLALVSFLAWGFLGGDWKQAMLVAVAVLIITCPCALGLAVPVVQVVAAGELFRKGIMVKDGSALERLAETDTVAFDKTGTLTMGSSRLVRVDAMDESAAAIARGLAAHSRHPLSRALVRDTETAPISFDRVTEIPGGGLEARNGADIYRLGNAAFACGTSFVPRTADSPFSEVVLSKNGVDLARFFFDDTLRPGACEAIDRLDAAGLETLIVSGDRQTVVDNTAHALGIDRALGSLTPKQKVEECQRLNGEGRRVLMVGDGINDAPALAAAHVSMAPATASDIGRQAADLVFFIDRLDAVPEAIAVARRSASLIRQNFALAIGYNVLAVPIAIAGLATPLIAAVAMSTSSIIVVTNALRLNGFGKRPDMHIRRGIGRSAEVKAA</sequence>
<evidence type="ECO:0000250" key="1"/>
<evidence type="ECO:0000255" key="2"/>
<evidence type="ECO:0000255" key="3">
    <source>
        <dbReference type="PROSITE-ProRule" id="PRU00280"/>
    </source>
</evidence>
<evidence type="ECO:0000305" key="4"/>
<keyword id="KW-0067">ATP-binding</keyword>
<keyword id="KW-1003">Cell membrane</keyword>
<keyword id="KW-0460">Magnesium</keyword>
<keyword id="KW-0472">Membrane</keyword>
<keyword id="KW-0479">Metal-binding</keyword>
<keyword id="KW-0535">Nitrogen fixation</keyword>
<keyword id="KW-0547">Nucleotide-binding</keyword>
<keyword id="KW-0597">Phosphoprotein</keyword>
<keyword id="KW-1278">Translocase</keyword>
<keyword id="KW-0812">Transmembrane</keyword>
<keyword id="KW-1133">Transmembrane helix</keyword>
<proteinExistence type="inferred from homology"/>
<feature type="chain" id="PRO_0000046155" description="Nitrogen fixation protein FixI">
    <location>
        <begin position="1"/>
        <end position="761"/>
    </location>
</feature>
<feature type="topological domain" description="Cytoplasmic" evidence="2">
    <location>
        <begin position="1"/>
        <end position="120"/>
    </location>
</feature>
<feature type="transmembrane region" description="Helical" evidence="2">
    <location>
        <begin position="121"/>
        <end position="142"/>
    </location>
</feature>
<feature type="topological domain" description="Extracellular" evidence="2">
    <location>
        <begin position="143"/>
        <end position="155"/>
    </location>
</feature>
<feature type="transmembrane region" description="Helical" evidence="2">
    <location>
        <begin position="156"/>
        <end position="177"/>
    </location>
</feature>
<feature type="topological domain" description="Cytoplasmic" evidence="2">
    <location>
        <begin position="178"/>
        <end position="184"/>
    </location>
</feature>
<feature type="transmembrane region" description="Helical" evidence="2">
    <location>
        <begin position="185"/>
        <end position="205"/>
    </location>
</feature>
<feature type="topological domain" description="Extracellular" evidence="2">
    <location>
        <begin position="206"/>
        <end position="217"/>
    </location>
</feature>
<feature type="transmembrane region" description="Helical" evidence="2">
    <location>
        <begin position="218"/>
        <end position="238"/>
    </location>
</feature>
<feature type="topological domain" description="Cytoplasmic" evidence="2">
    <location>
        <begin position="239"/>
        <end position="367"/>
    </location>
</feature>
<feature type="transmembrane region" description="Helical" evidence="2">
    <location>
        <begin position="368"/>
        <end position="390"/>
    </location>
</feature>
<feature type="topological domain" description="Extracellular" evidence="2">
    <location>
        <begin position="391"/>
        <end position="395"/>
    </location>
</feature>
<feature type="transmembrane region" description="Helical" evidence="2">
    <location>
        <begin position="396"/>
        <end position="415"/>
    </location>
</feature>
<feature type="topological domain" description="Cytoplasmic" evidence="2">
    <location>
        <begin position="416"/>
        <end position="691"/>
    </location>
</feature>
<feature type="transmembrane region" description="Helical" evidence="2">
    <location>
        <begin position="692"/>
        <end position="711"/>
    </location>
</feature>
<feature type="topological domain" description="Extracellular" evidence="2">
    <location>
        <begin position="712"/>
        <end position="716"/>
    </location>
</feature>
<feature type="transmembrane region" description="Helical" evidence="2">
    <location>
        <begin position="717"/>
        <end position="735"/>
    </location>
</feature>
<feature type="topological domain" description="Cytoplasmic" evidence="2">
    <location>
        <begin position="736"/>
        <end position="761"/>
    </location>
</feature>
<feature type="domain" description="HMA" evidence="3">
    <location>
        <begin position="36"/>
        <end position="106"/>
    </location>
</feature>
<feature type="active site" description="4-aspartylphosphate intermediate" evidence="1">
    <location>
        <position position="453"/>
    </location>
</feature>
<feature type="binding site" evidence="3">
    <location>
        <position position="47"/>
    </location>
    <ligand>
        <name>a metal cation</name>
        <dbReference type="ChEBI" id="CHEBI:25213"/>
    </ligand>
</feature>
<feature type="binding site" evidence="3">
    <location>
        <position position="50"/>
    </location>
    <ligand>
        <name>a metal cation</name>
        <dbReference type="ChEBI" id="CHEBI:25213"/>
    </ligand>
</feature>
<feature type="binding site">
    <location>
        <position position="637"/>
    </location>
    <ligand>
        <name>Mg(2+)</name>
        <dbReference type="ChEBI" id="CHEBI:18420"/>
    </ligand>
</feature>
<feature type="binding site">
    <location>
        <position position="641"/>
    </location>
    <ligand>
        <name>Mg(2+)</name>
        <dbReference type="ChEBI" id="CHEBI:18420"/>
    </ligand>
</feature>
<reference key="1">
    <citation type="submission" date="1997-09" db="EMBL/GenBank/DDBJ databases">
        <authorList>
            <person name="Mitsch M.J."/>
            <person name="Rochepeau P."/>
            <person name="Hynes M.F."/>
        </authorList>
    </citation>
    <scope>NUCLEOTIDE SEQUENCE [GENOMIC DNA]</scope>
    <source>
        <strain>VF39</strain>
    </source>
</reference>
<dbReference type="EC" id="7.2.2.-"/>
<dbReference type="EMBL" id="AJ001522">
    <property type="protein sequence ID" value="CAA04807.1"/>
    <property type="molecule type" value="Genomic_DNA"/>
</dbReference>
<dbReference type="SMR" id="O33533"/>
<dbReference type="GO" id="GO:0005886">
    <property type="term" value="C:plasma membrane"/>
    <property type="evidence" value="ECO:0007669"/>
    <property type="project" value="UniProtKB-SubCell"/>
</dbReference>
<dbReference type="GO" id="GO:0005524">
    <property type="term" value="F:ATP binding"/>
    <property type="evidence" value="ECO:0007669"/>
    <property type="project" value="UniProtKB-KW"/>
</dbReference>
<dbReference type="GO" id="GO:0016887">
    <property type="term" value="F:ATP hydrolysis activity"/>
    <property type="evidence" value="ECO:0007669"/>
    <property type="project" value="InterPro"/>
</dbReference>
<dbReference type="GO" id="GO:0019829">
    <property type="term" value="F:ATPase-coupled monoatomic cation transmembrane transporter activity"/>
    <property type="evidence" value="ECO:0007669"/>
    <property type="project" value="InterPro"/>
</dbReference>
<dbReference type="GO" id="GO:0046872">
    <property type="term" value="F:metal ion binding"/>
    <property type="evidence" value="ECO:0007669"/>
    <property type="project" value="UniProtKB-KW"/>
</dbReference>
<dbReference type="GO" id="GO:0015662">
    <property type="term" value="F:P-type ion transporter activity"/>
    <property type="evidence" value="ECO:0007669"/>
    <property type="project" value="UniProtKB-ARBA"/>
</dbReference>
<dbReference type="GO" id="GO:0009399">
    <property type="term" value="P:nitrogen fixation"/>
    <property type="evidence" value="ECO:0007669"/>
    <property type="project" value="UniProtKB-KW"/>
</dbReference>
<dbReference type="CDD" id="cd00371">
    <property type="entry name" value="HMA"/>
    <property type="match status" value="1"/>
</dbReference>
<dbReference type="CDD" id="cd02092">
    <property type="entry name" value="P-type_ATPase_FixI-like"/>
    <property type="match status" value="1"/>
</dbReference>
<dbReference type="FunFam" id="2.70.150.10:FF:000002">
    <property type="entry name" value="Copper-transporting ATPase 1, putative"/>
    <property type="match status" value="1"/>
</dbReference>
<dbReference type="Gene3D" id="3.30.70.100">
    <property type="match status" value="1"/>
</dbReference>
<dbReference type="Gene3D" id="3.40.1110.10">
    <property type="entry name" value="Calcium-transporting ATPase, cytoplasmic domain N"/>
    <property type="match status" value="1"/>
</dbReference>
<dbReference type="Gene3D" id="2.70.150.10">
    <property type="entry name" value="Calcium-transporting ATPase, cytoplasmic transduction domain A"/>
    <property type="match status" value="1"/>
</dbReference>
<dbReference type="Gene3D" id="3.40.50.1000">
    <property type="entry name" value="HAD superfamily/HAD-like"/>
    <property type="match status" value="1"/>
</dbReference>
<dbReference type="InterPro" id="IPR023299">
    <property type="entry name" value="ATPase_P-typ_cyto_dom_N"/>
</dbReference>
<dbReference type="InterPro" id="IPR018303">
    <property type="entry name" value="ATPase_P-typ_P_site"/>
</dbReference>
<dbReference type="InterPro" id="IPR023298">
    <property type="entry name" value="ATPase_P-typ_TM_dom_sf"/>
</dbReference>
<dbReference type="InterPro" id="IPR008250">
    <property type="entry name" value="ATPase_P-typ_transduc_dom_A_sf"/>
</dbReference>
<dbReference type="InterPro" id="IPR036412">
    <property type="entry name" value="HAD-like_sf"/>
</dbReference>
<dbReference type="InterPro" id="IPR023214">
    <property type="entry name" value="HAD_sf"/>
</dbReference>
<dbReference type="InterPro" id="IPR017969">
    <property type="entry name" value="Heavy-metal-associated_CS"/>
</dbReference>
<dbReference type="InterPro" id="IPR006121">
    <property type="entry name" value="HMA_dom"/>
</dbReference>
<dbReference type="InterPro" id="IPR036163">
    <property type="entry name" value="HMA_dom_sf"/>
</dbReference>
<dbReference type="InterPro" id="IPR027256">
    <property type="entry name" value="P-typ_ATPase_IB"/>
</dbReference>
<dbReference type="InterPro" id="IPR001757">
    <property type="entry name" value="P_typ_ATPase"/>
</dbReference>
<dbReference type="NCBIfam" id="TIGR01511">
    <property type="entry name" value="ATPase-IB1_Cu"/>
    <property type="match status" value="1"/>
</dbReference>
<dbReference type="NCBIfam" id="TIGR01512">
    <property type="entry name" value="ATPase-IB2_Cd"/>
    <property type="match status" value="1"/>
</dbReference>
<dbReference type="NCBIfam" id="TIGR01525">
    <property type="entry name" value="ATPase-IB_hvy"/>
    <property type="match status" value="1"/>
</dbReference>
<dbReference type="NCBIfam" id="TIGR01494">
    <property type="entry name" value="ATPase_P-type"/>
    <property type="match status" value="1"/>
</dbReference>
<dbReference type="PANTHER" id="PTHR46594">
    <property type="entry name" value="P-TYPE CATION-TRANSPORTING ATPASE"/>
    <property type="match status" value="1"/>
</dbReference>
<dbReference type="PANTHER" id="PTHR46594:SF4">
    <property type="entry name" value="P-TYPE CATION-TRANSPORTING ATPASE"/>
    <property type="match status" value="1"/>
</dbReference>
<dbReference type="Pfam" id="PF00122">
    <property type="entry name" value="E1-E2_ATPase"/>
    <property type="match status" value="1"/>
</dbReference>
<dbReference type="Pfam" id="PF00403">
    <property type="entry name" value="HMA"/>
    <property type="match status" value="1"/>
</dbReference>
<dbReference type="Pfam" id="PF00702">
    <property type="entry name" value="Hydrolase"/>
    <property type="match status" value="1"/>
</dbReference>
<dbReference type="PRINTS" id="PR00119">
    <property type="entry name" value="CATATPASE"/>
</dbReference>
<dbReference type="PRINTS" id="PR00943">
    <property type="entry name" value="CUATPASE"/>
</dbReference>
<dbReference type="SUPFAM" id="SSF81653">
    <property type="entry name" value="Calcium ATPase, transduction domain A"/>
    <property type="match status" value="1"/>
</dbReference>
<dbReference type="SUPFAM" id="SSF81665">
    <property type="entry name" value="Calcium ATPase, transmembrane domain M"/>
    <property type="match status" value="1"/>
</dbReference>
<dbReference type="SUPFAM" id="SSF56784">
    <property type="entry name" value="HAD-like"/>
    <property type="match status" value="1"/>
</dbReference>
<dbReference type="SUPFAM" id="SSF55008">
    <property type="entry name" value="HMA, heavy metal-associated domain"/>
    <property type="match status" value="1"/>
</dbReference>
<dbReference type="PROSITE" id="PS00154">
    <property type="entry name" value="ATPASE_E1_E2"/>
    <property type="match status" value="1"/>
</dbReference>
<dbReference type="PROSITE" id="PS01047">
    <property type="entry name" value="HMA_1"/>
    <property type="match status" value="1"/>
</dbReference>
<dbReference type="PROSITE" id="PS50846">
    <property type="entry name" value="HMA_2"/>
    <property type="match status" value="1"/>
</dbReference>
<comment type="function">
    <text>FixI is a pump of a specific cation involved in symbiotic nitrogen fixation. The four proteins FixG, FixH, FixI, and FixS may participate in a membrane-bound complex coupling the FixI cation pump with a redox process catalyzed by FixG.</text>
</comment>
<comment type="catalytic activity">
    <reaction>
        <text>ATP + H2O = ADP + phosphate + H(+)</text>
        <dbReference type="Rhea" id="RHEA:13065"/>
        <dbReference type="ChEBI" id="CHEBI:15377"/>
        <dbReference type="ChEBI" id="CHEBI:15378"/>
        <dbReference type="ChEBI" id="CHEBI:30616"/>
        <dbReference type="ChEBI" id="CHEBI:43474"/>
        <dbReference type="ChEBI" id="CHEBI:456216"/>
    </reaction>
</comment>
<comment type="subcellular location">
    <subcellularLocation>
        <location>Cell membrane</location>
        <topology>Multi-pass membrane protein</topology>
    </subcellularLocation>
</comment>
<comment type="similarity">
    <text evidence="4">Belongs to the cation transport ATPase (P-type) (TC 3.A.3) family. Type IB subfamily.</text>
</comment>
<accession>O33533</accession>
<gene>
    <name type="primary">fixI</name>
</gene>
<name>FIXI_RHILV</name>